<sequence length="329" mass="35560">MVQAKSWTLKKHFEGFPTDGNFELKTTELPPLNNGEVLLEALFLSVDPYMRVAAKKLKEGDRMMGEQVARVVESKNSAFPKGTIVAALLGWTSHSISDGNGLTKLPVEWPDKLPLSLALGTVGMPGLTAYFGLLDICGVKGGETVMVSAAAGAVGSVVGQIAKLKGCKVVGTAGSDEKVAYLKKLGFDVAFNYKTVKSLEEALRTASPDGYDCYFDNVGGEFSNAVILQMKTFGRIAICGAISQYNRTGPCPQGPAPEVVIYQQLRMEGFIVNRWQGEVRQKALTELMNWVSEGKVQCHEYVTEGFEKMPAAFMGMLKGENLGKTIVKA</sequence>
<dbReference type="EC" id="1.3.1.48" evidence="2"/>
<dbReference type="EC" id="1.3.1.74" evidence="2"/>
<dbReference type="EMBL" id="AK010888">
    <property type="protein sequence ID" value="BAB27248.1"/>
    <property type="molecule type" value="mRNA"/>
</dbReference>
<dbReference type="EMBL" id="AK011962">
    <property type="protein sequence ID" value="BAB27941.1"/>
    <property type="molecule type" value="mRNA"/>
</dbReference>
<dbReference type="EMBL" id="AK035425">
    <property type="protein sequence ID" value="BAC29060.1"/>
    <property type="molecule type" value="mRNA"/>
</dbReference>
<dbReference type="EMBL" id="AK134440">
    <property type="protein sequence ID" value="BAE22145.1"/>
    <property type="molecule type" value="mRNA"/>
</dbReference>
<dbReference type="EMBL" id="AK166835">
    <property type="protein sequence ID" value="BAE39057.1"/>
    <property type="molecule type" value="mRNA"/>
</dbReference>
<dbReference type="EMBL" id="BC014865">
    <property type="protein sequence ID" value="AAH14865.1"/>
    <property type="molecule type" value="mRNA"/>
</dbReference>
<dbReference type="CCDS" id="CCDS18215.1"/>
<dbReference type="RefSeq" id="NP_080244.1">
    <property type="nucleotide sequence ID" value="NM_025968.3"/>
</dbReference>
<dbReference type="SMR" id="Q91YR9"/>
<dbReference type="BioGRID" id="211942">
    <property type="interactions" value="2"/>
</dbReference>
<dbReference type="FunCoup" id="Q91YR9">
    <property type="interactions" value="477"/>
</dbReference>
<dbReference type="IntAct" id="Q91YR9">
    <property type="interactions" value="1"/>
</dbReference>
<dbReference type="STRING" id="10090.ENSMUSP00000030069"/>
<dbReference type="PhosphoSitePlus" id="Q91YR9"/>
<dbReference type="SwissPalm" id="Q91YR9"/>
<dbReference type="REPRODUCTION-2DPAGE" id="Q91YR9"/>
<dbReference type="jPOST" id="Q91YR9"/>
<dbReference type="PaxDb" id="10090-ENSMUSP00000030069"/>
<dbReference type="PeptideAtlas" id="Q91YR9"/>
<dbReference type="ProteomicsDB" id="291619"/>
<dbReference type="Pumba" id="Q91YR9"/>
<dbReference type="Antibodypedia" id="29578">
    <property type="antibodies" value="215 antibodies from 29 providers"/>
</dbReference>
<dbReference type="DNASU" id="67103"/>
<dbReference type="Ensembl" id="ENSMUST00000030069.7">
    <property type="protein sequence ID" value="ENSMUSP00000030069.7"/>
    <property type="gene ID" value="ENSMUSG00000028378.7"/>
</dbReference>
<dbReference type="GeneID" id="67103"/>
<dbReference type="KEGG" id="mmu:67103"/>
<dbReference type="UCSC" id="uc008szm.1">
    <property type="organism name" value="mouse"/>
</dbReference>
<dbReference type="AGR" id="MGI:1914353"/>
<dbReference type="CTD" id="22949"/>
<dbReference type="MGI" id="MGI:1914353">
    <property type="gene designation" value="Ptgr1"/>
</dbReference>
<dbReference type="VEuPathDB" id="HostDB:ENSMUSG00000028378"/>
<dbReference type="eggNOG" id="KOG1196">
    <property type="taxonomic scope" value="Eukaryota"/>
</dbReference>
<dbReference type="GeneTree" id="ENSGT00940000154810"/>
<dbReference type="HOGENOM" id="CLU_026673_29_3_1"/>
<dbReference type="InParanoid" id="Q91YR9"/>
<dbReference type="OMA" id="YPIKNIH"/>
<dbReference type="OrthoDB" id="809632at2759"/>
<dbReference type="PhylomeDB" id="Q91YR9"/>
<dbReference type="TreeFam" id="TF324201"/>
<dbReference type="BioGRID-ORCS" id="67103">
    <property type="hits" value="2 hits in 80 CRISPR screens"/>
</dbReference>
<dbReference type="PRO" id="PR:Q91YR9"/>
<dbReference type="Proteomes" id="UP000000589">
    <property type="component" value="Chromosome 4"/>
</dbReference>
<dbReference type="RNAct" id="Q91YR9">
    <property type="molecule type" value="protein"/>
</dbReference>
<dbReference type="Bgee" id="ENSMUSG00000028378">
    <property type="expression patterns" value="Expressed in epithelium of stomach and 235 other cell types or tissues"/>
</dbReference>
<dbReference type="GO" id="GO:0005737">
    <property type="term" value="C:cytoplasm"/>
    <property type="evidence" value="ECO:0000250"/>
    <property type="project" value="UniProtKB"/>
</dbReference>
<dbReference type="GO" id="GO:0036185">
    <property type="term" value="F:13-lipoxin reductase activity"/>
    <property type="evidence" value="ECO:0000250"/>
    <property type="project" value="UniProtKB"/>
</dbReference>
<dbReference type="GO" id="GO:0047522">
    <property type="term" value="F:15-oxoprostaglandin 13-oxidase [NAD(P)+] activity"/>
    <property type="evidence" value="ECO:0000250"/>
    <property type="project" value="UniProtKB"/>
</dbReference>
<dbReference type="GO" id="GO:0035798">
    <property type="term" value="F:2-alkenal reductase (NADPH) activity"/>
    <property type="evidence" value="ECO:0000250"/>
    <property type="project" value="UniProtKB"/>
</dbReference>
<dbReference type="GO" id="GO:0097257">
    <property type="term" value="F:leukotriene B4 12-hydroxy dehydrogenase activity"/>
    <property type="evidence" value="ECO:0000250"/>
    <property type="project" value="UniProtKB"/>
</dbReference>
<dbReference type="GO" id="GO:0036102">
    <property type="term" value="P:leukotriene B4 metabolic process"/>
    <property type="evidence" value="ECO:0000250"/>
    <property type="project" value="UniProtKB"/>
</dbReference>
<dbReference type="GO" id="GO:2001302">
    <property type="term" value="P:lipoxin A4 metabolic process"/>
    <property type="evidence" value="ECO:0000250"/>
    <property type="project" value="UniProtKB"/>
</dbReference>
<dbReference type="GO" id="GO:0006693">
    <property type="term" value="P:prostaglandin metabolic process"/>
    <property type="evidence" value="ECO:0000250"/>
    <property type="project" value="UniProtKB"/>
</dbReference>
<dbReference type="CDD" id="cd08294">
    <property type="entry name" value="leukotriene_B4_DH_like"/>
    <property type="match status" value="1"/>
</dbReference>
<dbReference type="FunFam" id="3.40.50.720:FF:000121">
    <property type="entry name" value="Prostaglandin reductase 2"/>
    <property type="match status" value="1"/>
</dbReference>
<dbReference type="Gene3D" id="3.90.180.10">
    <property type="entry name" value="Medium-chain alcohol dehydrogenases, catalytic domain"/>
    <property type="match status" value="1"/>
</dbReference>
<dbReference type="Gene3D" id="3.40.50.720">
    <property type="entry name" value="NAD(P)-binding Rossmann-like Domain"/>
    <property type="match status" value="1"/>
</dbReference>
<dbReference type="InterPro" id="IPR013149">
    <property type="entry name" value="ADH-like_C"/>
</dbReference>
<dbReference type="InterPro" id="IPR041694">
    <property type="entry name" value="ADH_N_2"/>
</dbReference>
<dbReference type="InterPro" id="IPR011032">
    <property type="entry name" value="GroES-like_sf"/>
</dbReference>
<dbReference type="InterPro" id="IPR045010">
    <property type="entry name" value="MDR_fam"/>
</dbReference>
<dbReference type="InterPro" id="IPR036291">
    <property type="entry name" value="NAD(P)-bd_dom_sf"/>
</dbReference>
<dbReference type="InterPro" id="IPR020843">
    <property type="entry name" value="PKS_ER"/>
</dbReference>
<dbReference type="InterPro" id="IPR014190">
    <property type="entry name" value="PTGR1"/>
</dbReference>
<dbReference type="NCBIfam" id="TIGR02825">
    <property type="entry name" value="B4_12hDH"/>
    <property type="match status" value="1"/>
</dbReference>
<dbReference type="PANTHER" id="PTHR43205">
    <property type="entry name" value="PROSTAGLANDIN REDUCTASE"/>
    <property type="match status" value="1"/>
</dbReference>
<dbReference type="PANTHER" id="PTHR43205:SF7">
    <property type="entry name" value="PROSTAGLANDIN REDUCTASE 1"/>
    <property type="match status" value="1"/>
</dbReference>
<dbReference type="Pfam" id="PF16884">
    <property type="entry name" value="ADH_N_2"/>
    <property type="match status" value="1"/>
</dbReference>
<dbReference type="Pfam" id="PF00107">
    <property type="entry name" value="ADH_zinc_N"/>
    <property type="match status" value="1"/>
</dbReference>
<dbReference type="SMART" id="SM00829">
    <property type="entry name" value="PKS_ER"/>
    <property type="match status" value="1"/>
</dbReference>
<dbReference type="SUPFAM" id="SSF50129">
    <property type="entry name" value="GroES-like"/>
    <property type="match status" value="2"/>
</dbReference>
<dbReference type="SUPFAM" id="SSF51735">
    <property type="entry name" value="NAD(P)-binding Rossmann-fold domains"/>
    <property type="match status" value="1"/>
</dbReference>
<feature type="chain" id="PRO_0000218066" description="Prostaglandin reductase 1">
    <location>
        <begin position="1"/>
        <end position="329"/>
    </location>
</feature>
<feature type="binding site" evidence="2">
    <location>
        <begin position="152"/>
        <end position="155"/>
    </location>
    <ligand>
        <name>NADP(+)</name>
        <dbReference type="ChEBI" id="CHEBI:58349"/>
    </ligand>
</feature>
<feature type="binding site" evidence="2">
    <location>
        <position position="178"/>
    </location>
    <ligand>
        <name>NADP(+)</name>
        <dbReference type="ChEBI" id="CHEBI:58349"/>
    </ligand>
</feature>
<feature type="binding site" evidence="2">
    <location>
        <position position="193"/>
    </location>
    <ligand>
        <name>NADP(+)</name>
        <dbReference type="ChEBI" id="CHEBI:58349"/>
    </ligand>
</feature>
<feature type="binding site" evidence="2">
    <location>
        <position position="217"/>
    </location>
    <ligand>
        <name>NADP(+)</name>
        <dbReference type="ChEBI" id="CHEBI:58349"/>
    </ligand>
</feature>
<feature type="binding site" evidence="2">
    <location>
        <begin position="239"/>
        <end position="245"/>
    </location>
    <ligand>
        <name>NADP(+)</name>
        <dbReference type="ChEBI" id="CHEBI:58349"/>
    </ligand>
</feature>
<feature type="binding site" evidence="2">
    <location>
        <begin position="270"/>
        <end position="272"/>
    </location>
    <ligand>
        <name>NADP(+)</name>
        <dbReference type="ChEBI" id="CHEBI:58349"/>
    </ligand>
</feature>
<feature type="binding site" evidence="2">
    <location>
        <position position="321"/>
    </location>
    <ligand>
        <name>NADP(+)</name>
        <dbReference type="ChEBI" id="CHEBI:58349"/>
    </ligand>
</feature>
<feature type="modified residue" description="Phosphothreonine" evidence="2">
    <location>
        <position position="18"/>
    </location>
</feature>
<feature type="modified residue" description="N6-(2-hydroxyisobutyryl)lysine; alternate" evidence="2">
    <location>
        <position position="178"/>
    </location>
</feature>
<feature type="modified residue" description="N6-acetyllysine; alternate" evidence="2">
    <location>
        <position position="178"/>
    </location>
</feature>
<feature type="sequence conflict" description="In Ref. 2; AAH14865." evidence="5" ref="2">
    <original>C</original>
    <variation>Y</variation>
    <location>
        <position position="298"/>
    </location>
</feature>
<feature type="sequence conflict" description="In Ref. 2; AAH14865." evidence="5" ref="2">
    <original>Y</original>
    <variation>H</variation>
    <location>
        <position position="301"/>
    </location>
</feature>
<keyword id="KW-0007">Acetylation</keyword>
<keyword id="KW-0963">Cytoplasm</keyword>
<keyword id="KW-0276">Fatty acid metabolism</keyword>
<keyword id="KW-0379">Hydroxylation</keyword>
<keyword id="KW-0443">Lipid metabolism</keyword>
<keyword id="KW-0521">NADP</keyword>
<keyword id="KW-0560">Oxidoreductase</keyword>
<keyword id="KW-0597">Phosphoprotein</keyword>
<keyword id="KW-0644">Prostaglandin metabolism</keyword>
<keyword id="KW-1185">Reference proteome</keyword>
<accession>Q91YR9</accession>
<accession>Q3TKT6</accession>
<accession>Q9CPS1</accession>
<comment type="function">
    <text evidence="1 2 3">NAD(P)H-dependent oxidoreductase involved in metabolic inactivation of pro- and anti-inflammatory eicosanoids: prostaglandins (PG), leukotrienes (LT) and lipoxins (LX). Catalyzes with high efficiency the reduction of the 13,14 double bond of 15-oxoPGs, including 15-oxo-PGE1, 15-oxo-PGE2, 15-oxo-PGF1-alpha and 15-oxo-PGF2-alpha (By similarity). Catalyzes with lower efficiency the oxidation of the hydroxyl group at C12 of LTB4 and its derivatives, converting them into biologically less active 12-oxo-LTB4 metabolites (By similarity). Reduces 15-oxo-LXA4 to 13,14 dihydro-15-oxo-LXA4, enhancing neutrophil recruitment at the inflammatory site (By similarity). Plays a role in metabolic detoxification of alkenals and ketones. Reduces alpha,beta-unsaturated alkenals and ketones, particularly those with medium-chain length, showing highest affinity toward (2E)-decenal and (3E)-3-nonen-2-one (By similarity). May inactivate 4-hydroxy-2-nonenal, a cytotoxic lipid constituent of oxidized low-density lipoprotein particles (By similarity).</text>
</comment>
<comment type="catalytic activity">
    <reaction evidence="2">
        <text>13,14-dihydro-15-oxo-prostaglandin E1 + NADP(+) = 15-oxoprostaglandin E1 + NADPH + H(+)</text>
        <dbReference type="Rhea" id="RHEA:50584"/>
        <dbReference type="ChEBI" id="CHEBI:15378"/>
        <dbReference type="ChEBI" id="CHEBI:57401"/>
        <dbReference type="ChEBI" id="CHEBI:57783"/>
        <dbReference type="ChEBI" id="CHEBI:58349"/>
        <dbReference type="ChEBI" id="CHEBI:133408"/>
    </reaction>
    <physiologicalReaction direction="right-to-left" evidence="2">
        <dbReference type="Rhea" id="RHEA:50586"/>
    </physiologicalReaction>
</comment>
<comment type="catalytic activity">
    <reaction evidence="2">
        <text>13,14-dihydro-15-oxo-prostaglandin E2 + NADP(+) = 15-oxoprostaglandin E2 + NADPH + H(+)</text>
        <dbReference type="Rhea" id="RHEA:11912"/>
        <dbReference type="ChEBI" id="CHEBI:15378"/>
        <dbReference type="ChEBI" id="CHEBI:57400"/>
        <dbReference type="ChEBI" id="CHEBI:57402"/>
        <dbReference type="ChEBI" id="CHEBI:57783"/>
        <dbReference type="ChEBI" id="CHEBI:58349"/>
        <dbReference type="EC" id="1.3.1.48"/>
    </reaction>
    <physiologicalReaction direction="right-to-left" evidence="2">
        <dbReference type="Rhea" id="RHEA:11914"/>
    </physiologicalReaction>
</comment>
<comment type="catalytic activity">
    <reaction evidence="2">
        <text>13,14-dihydro-15-oxo-prostaglandin F1alpha + NADP(+) = 15-oxoprostaglandin F1alpha + NADPH + H(+)</text>
        <dbReference type="Rhea" id="RHEA:50592"/>
        <dbReference type="ChEBI" id="CHEBI:15378"/>
        <dbReference type="ChEBI" id="CHEBI:57783"/>
        <dbReference type="ChEBI" id="CHEBI:58349"/>
        <dbReference type="ChEBI" id="CHEBI:79072"/>
        <dbReference type="ChEBI" id="CHEBI:133411"/>
    </reaction>
    <physiologicalReaction direction="right-to-left" evidence="2">
        <dbReference type="Rhea" id="RHEA:50594"/>
    </physiologicalReaction>
</comment>
<comment type="catalytic activity">
    <reaction evidence="2">
        <text>13,14-dihydro-15-oxo-PGF2alpha + NADP(+) = 15-oxoprostaglandin F2alpha + NADPH + H(+)</text>
        <dbReference type="Rhea" id="RHEA:50588"/>
        <dbReference type="ChEBI" id="CHEBI:15378"/>
        <dbReference type="ChEBI" id="CHEBI:57783"/>
        <dbReference type="ChEBI" id="CHEBI:58349"/>
        <dbReference type="ChEBI" id="CHEBI:133374"/>
        <dbReference type="ChEBI" id="CHEBI:133409"/>
    </reaction>
    <physiologicalReaction direction="right-to-left" evidence="2">
        <dbReference type="Rhea" id="RHEA:50590"/>
    </physiologicalReaction>
</comment>
<comment type="catalytic activity">
    <reaction evidence="3 4">
        <text>leukotriene B4 + NADP(+) = 12-oxo-leukotriene B4 + NADPH + H(+)</text>
        <dbReference type="Rhea" id="RHEA:50608"/>
        <dbReference type="ChEBI" id="CHEBI:15378"/>
        <dbReference type="ChEBI" id="CHEBI:57461"/>
        <dbReference type="ChEBI" id="CHEBI:57783"/>
        <dbReference type="ChEBI" id="CHEBI:58349"/>
        <dbReference type="ChEBI" id="CHEBI:133309"/>
    </reaction>
    <physiologicalReaction direction="left-to-right" evidence="3 4">
        <dbReference type="Rhea" id="RHEA:50609"/>
    </physiologicalReaction>
</comment>
<comment type="catalytic activity">
    <reaction evidence="3">
        <text>20-hydroxy-leukotriene B4 + NADP(+) = 12-oxo-20-hydroxy-leukotriene B4 + NADPH + H(+)</text>
        <dbReference type="Rhea" id="RHEA:51208"/>
        <dbReference type="ChEBI" id="CHEBI:15378"/>
        <dbReference type="ChEBI" id="CHEBI:57460"/>
        <dbReference type="ChEBI" id="CHEBI:57783"/>
        <dbReference type="ChEBI" id="CHEBI:58349"/>
        <dbReference type="ChEBI" id="CHEBI:133346"/>
    </reaction>
    <physiologicalReaction direction="left-to-right" evidence="3">
        <dbReference type="Rhea" id="RHEA:51209"/>
    </physiologicalReaction>
</comment>
<comment type="catalytic activity">
    <reaction evidence="3">
        <text>6-trans-leukotriene B4 + NADP(+) = 12-oxo-(5S)-hydroxy-(6E,8E,10E,14Z)-eicosatetraenoate + NADPH + H(+)</text>
        <dbReference type="Rhea" id="RHEA:51204"/>
        <dbReference type="ChEBI" id="CHEBI:15378"/>
        <dbReference type="ChEBI" id="CHEBI:57783"/>
        <dbReference type="ChEBI" id="CHEBI:58349"/>
        <dbReference type="ChEBI" id="CHEBI:90723"/>
        <dbReference type="ChEBI" id="CHEBI:133974"/>
    </reaction>
    <physiologicalReaction direction="left-to-right" evidence="3">
        <dbReference type="Rhea" id="RHEA:51205"/>
    </physiologicalReaction>
</comment>
<comment type="catalytic activity">
    <reaction evidence="3">
        <text>(5S,12S)-dihydroxy-(6E,10E,12E,14Z)-eicosatetraenoate + NADP(+) = 12-oxo-(5S)-hydroxy-(6E,8E,10E,14Z)-eicosatetraenoate + NADPH + H(+)</text>
        <dbReference type="Rhea" id="RHEA:51212"/>
        <dbReference type="ChEBI" id="CHEBI:15378"/>
        <dbReference type="ChEBI" id="CHEBI:57783"/>
        <dbReference type="ChEBI" id="CHEBI:58349"/>
        <dbReference type="ChEBI" id="CHEBI:133974"/>
        <dbReference type="ChEBI" id="CHEBI:133975"/>
    </reaction>
    <physiologicalReaction direction="left-to-right" evidence="3">
        <dbReference type="Rhea" id="RHEA:51213"/>
    </physiologicalReaction>
</comment>
<comment type="catalytic activity">
    <reaction evidence="2">
        <text>an n-alkanal + NADP(+) = an alk-2-enal + NADPH + H(+)</text>
        <dbReference type="Rhea" id="RHEA:13737"/>
        <dbReference type="ChEBI" id="CHEBI:12834"/>
        <dbReference type="ChEBI" id="CHEBI:13757"/>
        <dbReference type="ChEBI" id="CHEBI:15378"/>
        <dbReference type="ChEBI" id="CHEBI:57783"/>
        <dbReference type="ChEBI" id="CHEBI:58349"/>
        <dbReference type="EC" id="1.3.1.74"/>
    </reaction>
    <physiologicalReaction direction="right-to-left" evidence="2">
        <dbReference type="Rhea" id="RHEA:13739"/>
    </physiologicalReaction>
</comment>
<comment type="catalytic activity">
    <reaction evidence="2">
        <text>hexanal + NADP(+) = (E)-hex-2-enal + NADPH + H(+)</text>
        <dbReference type="Rhea" id="RHEA:50776"/>
        <dbReference type="ChEBI" id="CHEBI:15378"/>
        <dbReference type="ChEBI" id="CHEBI:28913"/>
        <dbReference type="ChEBI" id="CHEBI:57783"/>
        <dbReference type="ChEBI" id="CHEBI:58349"/>
        <dbReference type="ChEBI" id="CHEBI:88528"/>
    </reaction>
    <physiologicalReaction direction="right-to-left" evidence="2">
        <dbReference type="Rhea" id="RHEA:50778"/>
    </physiologicalReaction>
</comment>
<comment type="catalytic activity">
    <reaction evidence="2">
        <text>octanal + NADP(+) = (2E)-octenal + NADPH + H(+)</text>
        <dbReference type="Rhea" id="RHEA:50780"/>
        <dbReference type="ChEBI" id="CHEBI:15378"/>
        <dbReference type="ChEBI" id="CHEBI:17935"/>
        <dbReference type="ChEBI" id="CHEBI:57783"/>
        <dbReference type="ChEBI" id="CHEBI:58349"/>
        <dbReference type="ChEBI" id="CHEBI:61748"/>
    </reaction>
    <physiologicalReaction direction="right-to-left" evidence="2">
        <dbReference type="Rhea" id="RHEA:50782"/>
    </physiologicalReaction>
</comment>
<comment type="catalytic activity">
    <reaction evidence="2">
        <text>decanal + NADP(+) = (2E)-decenal + NADPH + H(+)</text>
        <dbReference type="Rhea" id="RHEA:50612"/>
        <dbReference type="ChEBI" id="CHEBI:15378"/>
        <dbReference type="ChEBI" id="CHEBI:31457"/>
        <dbReference type="ChEBI" id="CHEBI:57783"/>
        <dbReference type="ChEBI" id="CHEBI:58349"/>
        <dbReference type="ChEBI" id="CHEBI:133455"/>
    </reaction>
    <physiologicalReaction direction="right-to-left" evidence="2">
        <dbReference type="Rhea" id="RHEA:50614"/>
    </physiologicalReaction>
</comment>
<comment type="catalytic activity">
    <reaction evidence="2">
        <text>dodecanal + NADP(+) = (2E)-dodecenal + NADPH + H(+)</text>
        <dbReference type="Rhea" id="RHEA:50784"/>
        <dbReference type="ChEBI" id="CHEBI:15378"/>
        <dbReference type="ChEBI" id="CHEBI:27836"/>
        <dbReference type="ChEBI" id="CHEBI:57783"/>
        <dbReference type="ChEBI" id="CHEBI:58349"/>
        <dbReference type="ChEBI" id="CHEBI:133741"/>
    </reaction>
    <physiologicalReaction direction="right-to-left" evidence="2">
        <dbReference type="Rhea" id="RHEA:50786"/>
    </physiologicalReaction>
</comment>
<comment type="catalytic activity">
    <reaction evidence="1">
        <text>4-hydroxynonanal + NADP(+) = (E)-4-hydroxynon-2-enal + NADPH + H(+)</text>
        <dbReference type="Rhea" id="RHEA:64736"/>
        <dbReference type="ChEBI" id="CHEBI:15378"/>
        <dbReference type="ChEBI" id="CHEBI:57783"/>
        <dbReference type="ChEBI" id="CHEBI:58349"/>
        <dbReference type="ChEBI" id="CHEBI:58968"/>
        <dbReference type="ChEBI" id="CHEBI:156112"/>
    </reaction>
    <physiologicalReaction direction="right-to-left" evidence="1">
        <dbReference type="Rhea" id="RHEA:64738"/>
    </physiologicalReaction>
</comment>
<comment type="catalytic activity">
    <reaction evidence="2">
        <text>pentan-2-one + NADP(+) = (E)-pent-3-en-2-one + NADPH + H(+)</text>
        <dbReference type="Rhea" id="RHEA:50788"/>
        <dbReference type="ChEBI" id="CHEBI:15378"/>
        <dbReference type="ChEBI" id="CHEBI:16472"/>
        <dbReference type="ChEBI" id="CHEBI:57783"/>
        <dbReference type="ChEBI" id="CHEBI:58349"/>
        <dbReference type="ChEBI" id="CHEBI:145276"/>
    </reaction>
    <physiologicalReaction direction="right-to-left" evidence="2">
        <dbReference type="Rhea" id="RHEA:50790"/>
    </physiologicalReaction>
</comment>
<comment type="catalytic activity">
    <reaction evidence="2">
        <text>nonan-2-one + NADP(+) = (3E)-nonen-2-one + NADPH + H(+)</text>
        <dbReference type="Rhea" id="RHEA:50616"/>
        <dbReference type="ChEBI" id="CHEBI:15378"/>
        <dbReference type="ChEBI" id="CHEBI:57783"/>
        <dbReference type="ChEBI" id="CHEBI:58349"/>
        <dbReference type="ChEBI" id="CHEBI:77927"/>
        <dbReference type="ChEBI" id="CHEBI:133457"/>
    </reaction>
    <physiologicalReaction direction="right-to-left" evidence="2">
        <dbReference type="Rhea" id="RHEA:50618"/>
    </physiologicalReaction>
</comment>
<comment type="subunit">
    <text evidence="4">Monomer or homodimer.</text>
</comment>
<comment type="subcellular location">
    <subcellularLocation>
        <location evidence="3">Cytoplasm</location>
    </subcellularLocation>
</comment>
<comment type="similarity">
    <text evidence="5">Belongs to the NADP-dependent oxidoreductase L4BD family.</text>
</comment>
<name>PTGR1_MOUSE</name>
<evidence type="ECO:0000250" key="1">
    <source>
        <dbReference type="UniProtKB" id="P97584"/>
    </source>
</evidence>
<evidence type="ECO:0000250" key="2">
    <source>
        <dbReference type="UniProtKB" id="Q14914"/>
    </source>
</evidence>
<evidence type="ECO:0000250" key="3">
    <source>
        <dbReference type="UniProtKB" id="Q29073"/>
    </source>
</evidence>
<evidence type="ECO:0000250" key="4">
    <source>
        <dbReference type="UniProtKB" id="Q9EQZ5"/>
    </source>
</evidence>
<evidence type="ECO:0000305" key="5"/>
<organism>
    <name type="scientific">Mus musculus</name>
    <name type="common">Mouse</name>
    <dbReference type="NCBI Taxonomy" id="10090"/>
    <lineage>
        <taxon>Eukaryota</taxon>
        <taxon>Metazoa</taxon>
        <taxon>Chordata</taxon>
        <taxon>Craniata</taxon>
        <taxon>Vertebrata</taxon>
        <taxon>Euteleostomi</taxon>
        <taxon>Mammalia</taxon>
        <taxon>Eutheria</taxon>
        <taxon>Euarchontoglires</taxon>
        <taxon>Glires</taxon>
        <taxon>Rodentia</taxon>
        <taxon>Myomorpha</taxon>
        <taxon>Muroidea</taxon>
        <taxon>Muridae</taxon>
        <taxon>Murinae</taxon>
        <taxon>Mus</taxon>
        <taxon>Mus</taxon>
    </lineage>
</organism>
<proteinExistence type="evidence at protein level"/>
<protein>
    <recommendedName>
        <fullName>Prostaglandin reductase 1</fullName>
        <shortName>PRG-1</shortName>
    </recommendedName>
    <alternativeName>
        <fullName evidence="2">15-oxoprostaglandin 13-reductase</fullName>
        <ecNumber evidence="2">1.3.1.48</ecNumber>
    </alternativeName>
    <alternativeName>
        <fullName evidence="1">Dithiolethione-inducible gene 1 protein</fullName>
        <shortName evidence="1">D3T-inducible gene 1 protein</shortName>
        <shortName evidence="1">DIG-1</shortName>
    </alternativeName>
    <alternativeName>
        <fullName evidence="2">Leukotriene B4 12-hydroxydehydrogenase</fullName>
    </alternativeName>
    <alternativeName>
        <fullName evidence="2">NAD(P)H-dependent alkenal/one oxidoreductase</fullName>
        <ecNumber evidence="2">1.3.1.74</ecNumber>
    </alternativeName>
</protein>
<reference key="1">
    <citation type="journal article" date="2005" name="Science">
        <title>The transcriptional landscape of the mammalian genome.</title>
        <authorList>
            <person name="Carninci P."/>
            <person name="Kasukawa T."/>
            <person name="Katayama S."/>
            <person name="Gough J."/>
            <person name="Frith M.C."/>
            <person name="Maeda N."/>
            <person name="Oyama R."/>
            <person name="Ravasi T."/>
            <person name="Lenhard B."/>
            <person name="Wells C."/>
            <person name="Kodzius R."/>
            <person name="Shimokawa K."/>
            <person name="Bajic V.B."/>
            <person name="Brenner S.E."/>
            <person name="Batalov S."/>
            <person name="Forrest A.R."/>
            <person name="Zavolan M."/>
            <person name="Davis M.J."/>
            <person name="Wilming L.G."/>
            <person name="Aidinis V."/>
            <person name="Allen J.E."/>
            <person name="Ambesi-Impiombato A."/>
            <person name="Apweiler R."/>
            <person name="Aturaliya R.N."/>
            <person name="Bailey T.L."/>
            <person name="Bansal M."/>
            <person name="Baxter L."/>
            <person name="Beisel K.W."/>
            <person name="Bersano T."/>
            <person name="Bono H."/>
            <person name="Chalk A.M."/>
            <person name="Chiu K.P."/>
            <person name="Choudhary V."/>
            <person name="Christoffels A."/>
            <person name="Clutterbuck D.R."/>
            <person name="Crowe M.L."/>
            <person name="Dalla E."/>
            <person name="Dalrymple B.P."/>
            <person name="de Bono B."/>
            <person name="Della Gatta G."/>
            <person name="di Bernardo D."/>
            <person name="Down T."/>
            <person name="Engstrom P."/>
            <person name="Fagiolini M."/>
            <person name="Faulkner G."/>
            <person name="Fletcher C.F."/>
            <person name="Fukushima T."/>
            <person name="Furuno M."/>
            <person name="Futaki S."/>
            <person name="Gariboldi M."/>
            <person name="Georgii-Hemming P."/>
            <person name="Gingeras T.R."/>
            <person name="Gojobori T."/>
            <person name="Green R.E."/>
            <person name="Gustincich S."/>
            <person name="Harbers M."/>
            <person name="Hayashi Y."/>
            <person name="Hensch T.K."/>
            <person name="Hirokawa N."/>
            <person name="Hill D."/>
            <person name="Huminiecki L."/>
            <person name="Iacono M."/>
            <person name="Ikeo K."/>
            <person name="Iwama A."/>
            <person name="Ishikawa T."/>
            <person name="Jakt M."/>
            <person name="Kanapin A."/>
            <person name="Katoh M."/>
            <person name="Kawasawa Y."/>
            <person name="Kelso J."/>
            <person name="Kitamura H."/>
            <person name="Kitano H."/>
            <person name="Kollias G."/>
            <person name="Krishnan S.P."/>
            <person name="Kruger A."/>
            <person name="Kummerfeld S.K."/>
            <person name="Kurochkin I.V."/>
            <person name="Lareau L.F."/>
            <person name="Lazarevic D."/>
            <person name="Lipovich L."/>
            <person name="Liu J."/>
            <person name="Liuni S."/>
            <person name="McWilliam S."/>
            <person name="Madan Babu M."/>
            <person name="Madera M."/>
            <person name="Marchionni L."/>
            <person name="Matsuda H."/>
            <person name="Matsuzawa S."/>
            <person name="Miki H."/>
            <person name="Mignone F."/>
            <person name="Miyake S."/>
            <person name="Morris K."/>
            <person name="Mottagui-Tabar S."/>
            <person name="Mulder N."/>
            <person name="Nakano N."/>
            <person name="Nakauchi H."/>
            <person name="Ng P."/>
            <person name="Nilsson R."/>
            <person name="Nishiguchi S."/>
            <person name="Nishikawa S."/>
            <person name="Nori F."/>
            <person name="Ohara O."/>
            <person name="Okazaki Y."/>
            <person name="Orlando V."/>
            <person name="Pang K.C."/>
            <person name="Pavan W.J."/>
            <person name="Pavesi G."/>
            <person name="Pesole G."/>
            <person name="Petrovsky N."/>
            <person name="Piazza S."/>
            <person name="Reed J."/>
            <person name="Reid J.F."/>
            <person name="Ring B.Z."/>
            <person name="Ringwald M."/>
            <person name="Rost B."/>
            <person name="Ruan Y."/>
            <person name="Salzberg S.L."/>
            <person name="Sandelin A."/>
            <person name="Schneider C."/>
            <person name="Schoenbach C."/>
            <person name="Sekiguchi K."/>
            <person name="Semple C.A."/>
            <person name="Seno S."/>
            <person name="Sessa L."/>
            <person name="Sheng Y."/>
            <person name="Shibata Y."/>
            <person name="Shimada H."/>
            <person name="Shimada K."/>
            <person name="Silva D."/>
            <person name="Sinclair B."/>
            <person name="Sperling S."/>
            <person name="Stupka E."/>
            <person name="Sugiura K."/>
            <person name="Sultana R."/>
            <person name="Takenaka Y."/>
            <person name="Taki K."/>
            <person name="Tammoja K."/>
            <person name="Tan S.L."/>
            <person name="Tang S."/>
            <person name="Taylor M.S."/>
            <person name="Tegner J."/>
            <person name="Teichmann S.A."/>
            <person name="Ueda H.R."/>
            <person name="van Nimwegen E."/>
            <person name="Verardo R."/>
            <person name="Wei C.L."/>
            <person name="Yagi K."/>
            <person name="Yamanishi H."/>
            <person name="Zabarovsky E."/>
            <person name="Zhu S."/>
            <person name="Zimmer A."/>
            <person name="Hide W."/>
            <person name="Bult C."/>
            <person name="Grimmond S.M."/>
            <person name="Teasdale R.D."/>
            <person name="Liu E.T."/>
            <person name="Brusic V."/>
            <person name="Quackenbush J."/>
            <person name="Wahlestedt C."/>
            <person name="Mattick J.S."/>
            <person name="Hume D.A."/>
            <person name="Kai C."/>
            <person name="Sasaki D."/>
            <person name="Tomaru Y."/>
            <person name="Fukuda S."/>
            <person name="Kanamori-Katayama M."/>
            <person name="Suzuki M."/>
            <person name="Aoki J."/>
            <person name="Arakawa T."/>
            <person name="Iida J."/>
            <person name="Imamura K."/>
            <person name="Itoh M."/>
            <person name="Kato T."/>
            <person name="Kawaji H."/>
            <person name="Kawagashira N."/>
            <person name="Kawashima T."/>
            <person name="Kojima M."/>
            <person name="Kondo S."/>
            <person name="Konno H."/>
            <person name="Nakano K."/>
            <person name="Ninomiya N."/>
            <person name="Nishio T."/>
            <person name="Okada M."/>
            <person name="Plessy C."/>
            <person name="Shibata K."/>
            <person name="Shiraki T."/>
            <person name="Suzuki S."/>
            <person name="Tagami M."/>
            <person name="Waki K."/>
            <person name="Watahiki A."/>
            <person name="Okamura-Oho Y."/>
            <person name="Suzuki H."/>
            <person name="Kawai J."/>
            <person name="Hayashizaki Y."/>
        </authorList>
    </citation>
    <scope>NUCLEOTIDE SEQUENCE [LARGE SCALE MRNA]</scope>
    <source>
        <strain>C57BL/6J</strain>
        <tissue>Embryo</tissue>
        <tissue>Liver</tissue>
        <tissue>Testis</tissue>
        <tissue>Urinary bladder</tissue>
    </source>
</reference>
<reference key="2">
    <citation type="journal article" date="2004" name="Genome Res.">
        <title>The status, quality, and expansion of the NIH full-length cDNA project: the Mammalian Gene Collection (MGC).</title>
        <authorList>
            <consortium name="The MGC Project Team"/>
        </authorList>
    </citation>
    <scope>NUCLEOTIDE SEQUENCE [LARGE SCALE MRNA]</scope>
    <source>
        <strain>FVB/N</strain>
        <tissue>Mammary tumor</tissue>
    </source>
</reference>
<reference key="3">
    <citation type="journal article" date="2010" name="Cell">
        <title>A tissue-specific atlas of mouse protein phosphorylation and expression.</title>
        <authorList>
            <person name="Huttlin E.L."/>
            <person name="Jedrychowski M.P."/>
            <person name="Elias J.E."/>
            <person name="Goswami T."/>
            <person name="Rad R."/>
            <person name="Beausoleil S.A."/>
            <person name="Villen J."/>
            <person name="Haas W."/>
            <person name="Sowa M.E."/>
            <person name="Gygi S.P."/>
        </authorList>
    </citation>
    <scope>IDENTIFICATION BY MASS SPECTROMETRY [LARGE SCALE ANALYSIS]</scope>
    <source>
        <tissue>Brain</tissue>
        <tissue>Heart</tissue>
        <tissue>Kidney</tissue>
        <tissue>Liver</tissue>
        <tissue>Lung</tissue>
        <tissue>Pancreas</tissue>
        <tissue>Spleen</tissue>
        <tissue>Testis</tissue>
    </source>
</reference>
<reference key="4">
    <citation type="journal article" date="2013" name="Mol. Cell">
        <title>SIRT5-mediated lysine desuccinylation impacts diverse metabolic pathways.</title>
        <authorList>
            <person name="Park J."/>
            <person name="Chen Y."/>
            <person name="Tishkoff D.X."/>
            <person name="Peng C."/>
            <person name="Tan M."/>
            <person name="Dai L."/>
            <person name="Xie Z."/>
            <person name="Zhang Y."/>
            <person name="Zwaans B.M."/>
            <person name="Skinner M.E."/>
            <person name="Lombard D.B."/>
            <person name="Zhao Y."/>
        </authorList>
    </citation>
    <scope>ACETYLATION [LARGE SCALE ANALYSIS] AT LYS-178</scope>
    <scope>IDENTIFICATION BY MASS SPECTROMETRY [LARGE SCALE ANALYSIS]</scope>
    <source>
        <tissue>Embryonic fibroblast</tissue>
    </source>
</reference>
<gene>
    <name type="primary">Ptgr1</name>
    <name type="synonym">Ltb4dh</name>
</gene>